<sequence>MKLQLVAVGTKMPDWVQTGFIEYLRRFPKDMPFELAEIPAGKRGKNADIKRILEKEGELMLAAVGKNNRIVTLDIPGTPWETPQLAQQLERWKQDGRDVSLLIGGPEGLAPACKAAAEQSWSLSPLTLPHPLVRVLVAESLYRAWSITTNHPYHRE</sequence>
<feature type="chain" id="PRO_0000366680" description="Ribosomal RNA large subunit methyltransferase H">
    <location>
        <begin position="1"/>
        <end position="156"/>
    </location>
</feature>
<feature type="binding site" evidence="1">
    <location>
        <position position="73"/>
    </location>
    <ligand>
        <name>S-adenosyl-L-methionine</name>
        <dbReference type="ChEBI" id="CHEBI:59789"/>
    </ligand>
</feature>
<feature type="binding site" evidence="1">
    <location>
        <position position="104"/>
    </location>
    <ligand>
        <name>S-adenosyl-L-methionine</name>
        <dbReference type="ChEBI" id="CHEBI:59789"/>
    </ligand>
</feature>
<feature type="binding site" evidence="1">
    <location>
        <begin position="123"/>
        <end position="128"/>
    </location>
    <ligand>
        <name>S-adenosyl-L-methionine</name>
        <dbReference type="ChEBI" id="CHEBI:59789"/>
    </ligand>
</feature>
<organism>
    <name type="scientific">Yersinia pestis bv. Antiqua (strain Angola)</name>
    <dbReference type="NCBI Taxonomy" id="349746"/>
    <lineage>
        <taxon>Bacteria</taxon>
        <taxon>Pseudomonadati</taxon>
        <taxon>Pseudomonadota</taxon>
        <taxon>Gammaproteobacteria</taxon>
        <taxon>Enterobacterales</taxon>
        <taxon>Yersiniaceae</taxon>
        <taxon>Yersinia</taxon>
    </lineage>
</organism>
<dbReference type="EC" id="2.1.1.177" evidence="1"/>
<dbReference type="EMBL" id="CP000901">
    <property type="protein sequence ID" value="ABX86137.1"/>
    <property type="molecule type" value="Genomic_DNA"/>
</dbReference>
<dbReference type="RefSeq" id="WP_002210328.1">
    <property type="nucleotide sequence ID" value="NZ_CP009935.1"/>
</dbReference>
<dbReference type="SMR" id="A9R6Z5"/>
<dbReference type="GeneID" id="57976090"/>
<dbReference type="KEGG" id="ypg:YpAngola_A1847"/>
<dbReference type="PATRIC" id="fig|349746.12.peg.2823"/>
<dbReference type="GO" id="GO:0005737">
    <property type="term" value="C:cytoplasm"/>
    <property type="evidence" value="ECO:0007669"/>
    <property type="project" value="UniProtKB-SubCell"/>
</dbReference>
<dbReference type="GO" id="GO:0070038">
    <property type="term" value="F:rRNA (pseudouridine-N3-)-methyltransferase activity"/>
    <property type="evidence" value="ECO:0007669"/>
    <property type="project" value="UniProtKB-UniRule"/>
</dbReference>
<dbReference type="CDD" id="cd18081">
    <property type="entry name" value="RlmH-like"/>
    <property type="match status" value="1"/>
</dbReference>
<dbReference type="FunFam" id="3.40.1280.10:FF:000004">
    <property type="entry name" value="Ribosomal RNA large subunit methyltransferase H"/>
    <property type="match status" value="1"/>
</dbReference>
<dbReference type="Gene3D" id="3.40.1280.10">
    <property type="match status" value="1"/>
</dbReference>
<dbReference type="HAMAP" id="MF_00658">
    <property type="entry name" value="23SrRNA_methyltr_H"/>
    <property type="match status" value="1"/>
</dbReference>
<dbReference type="InterPro" id="IPR029028">
    <property type="entry name" value="Alpha/beta_knot_MTases"/>
</dbReference>
<dbReference type="InterPro" id="IPR003742">
    <property type="entry name" value="RlmH-like"/>
</dbReference>
<dbReference type="InterPro" id="IPR029026">
    <property type="entry name" value="tRNA_m1G_MTases_N"/>
</dbReference>
<dbReference type="NCBIfam" id="NF000984">
    <property type="entry name" value="PRK00103.1-1"/>
    <property type="match status" value="1"/>
</dbReference>
<dbReference type="NCBIfam" id="NF000986">
    <property type="entry name" value="PRK00103.1-4"/>
    <property type="match status" value="1"/>
</dbReference>
<dbReference type="NCBIfam" id="TIGR00246">
    <property type="entry name" value="tRNA_RlmH_YbeA"/>
    <property type="match status" value="1"/>
</dbReference>
<dbReference type="PANTHER" id="PTHR33603">
    <property type="entry name" value="METHYLTRANSFERASE"/>
    <property type="match status" value="1"/>
</dbReference>
<dbReference type="PANTHER" id="PTHR33603:SF1">
    <property type="entry name" value="RIBOSOMAL RNA LARGE SUBUNIT METHYLTRANSFERASE H"/>
    <property type="match status" value="1"/>
</dbReference>
<dbReference type="Pfam" id="PF02590">
    <property type="entry name" value="SPOUT_MTase"/>
    <property type="match status" value="1"/>
</dbReference>
<dbReference type="PIRSF" id="PIRSF004505">
    <property type="entry name" value="MT_bac"/>
    <property type="match status" value="1"/>
</dbReference>
<dbReference type="SUPFAM" id="SSF75217">
    <property type="entry name" value="alpha/beta knot"/>
    <property type="match status" value="1"/>
</dbReference>
<proteinExistence type="inferred from homology"/>
<evidence type="ECO:0000255" key="1">
    <source>
        <dbReference type="HAMAP-Rule" id="MF_00658"/>
    </source>
</evidence>
<accession>A9R6Z5</accession>
<protein>
    <recommendedName>
        <fullName evidence="1">Ribosomal RNA large subunit methyltransferase H</fullName>
        <ecNumber evidence="1">2.1.1.177</ecNumber>
    </recommendedName>
    <alternativeName>
        <fullName evidence="1">23S rRNA (pseudouridine1915-N3)-methyltransferase</fullName>
    </alternativeName>
    <alternativeName>
        <fullName evidence="1">23S rRNA m3Psi1915 methyltransferase</fullName>
    </alternativeName>
    <alternativeName>
        <fullName evidence="1">rRNA (pseudouridine-N3-)-methyltransferase RlmH</fullName>
    </alternativeName>
</protein>
<reference key="1">
    <citation type="journal article" date="2010" name="J. Bacteriol.">
        <title>Genome sequence of the deep-rooted Yersinia pestis strain Angola reveals new insights into the evolution and pangenome of the plague bacterium.</title>
        <authorList>
            <person name="Eppinger M."/>
            <person name="Worsham P.L."/>
            <person name="Nikolich M.P."/>
            <person name="Riley D.R."/>
            <person name="Sebastian Y."/>
            <person name="Mou S."/>
            <person name="Achtman M."/>
            <person name="Lindler L.E."/>
            <person name="Ravel J."/>
        </authorList>
    </citation>
    <scope>NUCLEOTIDE SEQUENCE [LARGE SCALE GENOMIC DNA]</scope>
    <source>
        <strain>Angola</strain>
    </source>
</reference>
<gene>
    <name evidence="1" type="primary">rlmH</name>
    <name type="ordered locus">YpAngola_A1847</name>
</gene>
<comment type="function">
    <text evidence="1">Specifically methylates the pseudouridine at position 1915 (m3Psi1915) in 23S rRNA.</text>
</comment>
<comment type="catalytic activity">
    <reaction evidence="1">
        <text>pseudouridine(1915) in 23S rRNA + S-adenosyl-L-methionine = N(3)-methylpseudouridine(1915) in 23S rRNA + S-adenosyl-L-homocysteine + H(+)</text>
        <dbReference type="Rhea" id="RHEA:42752"/>
        <dbReference type="Rhea" id="RHEA-COMP:10221"/>
        <dbReference type="Rhea" id="RHEA-COMP:10222"/>
        <dbReference type="ChEBI" id="CHEBI:15378"/>
        <dbReference type="ChEBI" id="CHEBI:57856"/>
        <dbReference type="ChEBI" id="CHEBI:59789"/>
        <dbReference type="ChEBI" id="CHEBI:65314"/>
        <dbReference type="ChEBI" id="CHEBI:74486"/>
        <dbReference type="EC" id="2.1.1.177"/>
    </reaction>
</comment>
<comment type="subunit">
    <text evidence="1">Homodimer.</text>
</comment>
<comment type="subcellular location">
    <subcellularLocation>
        <location evidence="1">Cytoplasm</location>
    </subcellularLocation>
</comment>
<comment type="similarity">
    <text evidence="1">Belongs to the RNA methyltransferase RlmH family.</text>
</comment>
<name>RLMH_YERPG</name>
<keyword id="KW-0963">Cytoplasm</keyword>
<keyword id="KW-0489">Methyltransferase</keyword>
<keyword id="KW-0698">rRNA processing</keyword>
<keyword id="KW-0949">S-adenosyl-L-methionine</keyword>
<keyword id="KW-0808">Transferase</keyword>